<keyword id="KW-1072">Activation of host autophagy by virus</keyword>
<keyword id="KW-0106">Calcium</keyword>
<keyword id="KW-0260">Enterotoxin</keyword>
<keyword id="KW-0325">Glycoprotein</keyword>
<keyword id="KW-1038">Host endoplasmic reticulum</keyword>
<keyword id="KW-1043">Host membrane</keyword>
<keyword id="KW-0945">Host-virus interaction</keyword>
<keyword id="KW-0407">Ion channel</keyword>
<keyword id="KW-0406">Ion transport</keyword>
<keyword id="KW-0472">Membrane</keyword>
<keyword id="KW-0479">Metal-binding</keyword>
<keyword id="KW-0964">Secreted</keyword>
<keyword id="KW-0735">Signal-anchor</keyword>
<keyword id="KW-0800">Toxin</keyword>
<keyword id="KW-0812">Transmembrane</keyword>
<keyword id="KW-1133">Transmembrane helix</keyword>
<keyword id="KW-0813">Transport</keyword>
<keyword id="KW-1182">Viral ion channel</keyword>
<keyword id="KW-0843">Virulence</keyword>
<proteinExistence type="evidence at transcript level"/>
<organismHost>
    <name type="scientific">Homo sapiens</name>
    <name type="common">Human</name>
    <dbReference type="NCBI Taxonomy" id="9606"/>
</organismHost>
<organism>
    <name type="scientific">Rotavirus A (strain RVA/Human/Australia/RV-4/1977/G1P1A[8])</name>
    <name type="common">RV-A</name>
    <name type="synonym">Rotavirus A (strain RV4)</name>
    <dbReference type="NCBI Taxonomy" id="31570"/>
    <lineage>
        <taxon>Viruses</taxon>
        <taxon>Riboviria</taxon>
        <taxon>Orthornavirae</taxon>
        <taxon>Duplornaviricota</taxon>
        <taxon>Resentoviricetes</taxon>
        <taxon>Reovirales</taxon>
        <taxon>Sedoreoviridae</taxon>
        <taxon>Rotavirus</taxon>
        <taxon>Rotavirus A</taxon>
    </lineage>
</organism>
<feature type="chain" id="PRO_0000369476" description="Non-structural glycoprotein 4">
    <location>
        <begin position="1"/>
        <end position="175"/>
    </location>
</feature>
<feature type="topological domain" description="Lumenal" evidence="1">
    <location>
        <begin position="1"/>
        <end position="28"/>
    </location>
</feature>
<feature type="transmembrane region" description="Helical; Signal-anchor for type III membrane protein" evidence="1">
    <location>
        <begin position="29"/>
        <end position="51"/>
    </location>
</feature>
<feature type="topological domain" description="Cytoplasmic" evidence="1">
    <location>
        <begin position="52"/>
        <end position="175"/>
    </location>
</feature>
<feature type="binding site" evidence="1">
    <location>
        <position position="120"/>
    </location>
    <ligand>
        <name>Ca(2+)</name>
        <dbReference type="ChEBI" id="CHEBI:29108"/>
    </ligand>
</feature>
<feature type="binding site" evidence="1">
    <location>
        <position position="123"/>
    </location>
    <ligand>
        <name>Ca(2+)</name>
        <dbReference type="ChEBI" id="CHEBI:29108"/>
    </ligand>
</feature>
<feature type="glycosylation site" description="N-linked (GlcNAc...) asparagine; by host" evidence="1">
    <location>
        <position position="8"/>
    </location>
</feature>
<feature type="glycosylation site" description="N-linked (GlcNAc...) asparagine; by host" evidence="1">
    <location>
        <position position="18"/>
    </location>
</feature>
<protein>
    <recommendedName>
        <fullName evidence="1">Non-structural glycoprotein 4</fullName>
        <shortName evidence="1">NSP4</shortName>
    </recommendedName>
    <alternativeName>
        <fullName evidence="1">NCVP5</fullName>
    </alternativeName>
    <alternativeName>
        <fullName evidence="1">NS28</fullName>
    </alternativeName>
</protein>
<dbReference type="EMBL" id="U59108">
    <property type="protein sequence ID" value="AAB81294.1"/>
    <property type="molecule type" value="mRNA"/>
</dbReference>
<dbReference type="GO" id="GO:0005576">
    <property type="term" value="C:extracellular region"/>
    <property type="evidence" value="ECO:0007669"/>
    <property type="project" value="UniProtKB-SubCell"/>
</dbReference>
<dbReference type="GO" id="GO:0044155">
    <property type="term" value="C:host caveola"/>
    <property type="evidence" value="ECO:0007669"/>
    <property type="project" value="UniProtKB-SubCell"/>
</dbReference>
<dbReference type="GO" id="GO:0044169">
    <property type="term" value="C:host cell rough endoplasmic reticulum membrane"/>
    <property type="evidence" value="ECO:0007669"/>
    <property type="project" value="UniProtKB-SubCell"/>
</dbReference>
<dbReference type="GO" id="GO:0016020">
    <property type="term" value="C:membrane"/>
    <property type="evidence" value="ECO:0007669"/>
    <property type="project" value="UniProtKB-UniRule"/>
</dbReference>
<dbReference type="GO" id="GO:0015267">
    <property type="term" value="F:channel activity"/>
    <property type="evidence" value="ECO:0007669"/>
    <property type="project" value="UniProtKB-KW"/>
</dbReference>
<dbReference type="GO" id="GO:0046872">
    <property type="term" value="F:metal ion binding"/>
    <property type="evidence" value="ECO:0007669"/>
    <property type="project" value="UniProtKB-UniRule"/>
</dbReference>
<dbReference type="GO" id="GO:0090729">
    <property type="term" value="F:toxin activity"/>
    <property type="evidence" value="ECO:0007669"/>
    <property type="project" value="UniProtKB-UniRule"/>
</dbReference>
<dbReference type="GO" id="GO:0034220">
    <property type="term" value="P:monoatomic ion transmembrane transport"/>
    <property type="evidence" value="ECO:0007669"/>
    <property type="project" value="UniProtKB-KW"/>
</dbReference>
<dbReference type="GO" id="GO:0039520">
    <property type="term" value="P:symbiont-mediated activation of host autophagy"/>
    <property type="evidence" value="ECO:0007669"/>
    <property type="project" value="UniProtKB-KW"/>
</dbReference>
<dbReference type="GO" id="GO:0016032">
    <property type="term" value="P:viral process"/>
    <property type="evidence" value="ECO:0007669"/>
    <property type="project" value="UniProtKB-UniRule"/>
</dbReference>
<dbReference type="Gene3D" id="1.20.5.430">
    <property type="match status" value="1"/>
</dbReference>
<dbReference type="HAMAP" id="MF_04091">
    <property type="entry name" value="ROTA_NSP4"/>
    <property type="match status" value="1"/>
</dbReference>
<dbReference type="InterPro" id="IPR002107">
    <property type="entry name" value="Rotavirus_NSP4"/>
</dbReference>
<dbReference type="Pfam" id="PF01452">
    <property type="entry name" value="Rota_NSP4"/>
    <property type="match status" value="1"/>
</dbReference>
<dbReference type="SUPFAM" id="SSF58030">
    <property type="entry name" value="Rotavirus nonstructural proteins"/>
    <property type="match status" value="1"/>
</dbReference>
<comment type="function">
    <text evidence="1">Plays an essential role in the virus replication cycle by acting as a viroporin. Creates a pore in the host endoplasmic reticulum and as a consequence releases Ca(2+) in the cytoplasm of infected cell. In turn, high levels of cytoplasmic calcium trigger membrane trafficking and transport of viral ER-associated proteins to viroplasms, sites of viral genome replication and immature particle assembly.</text>
</comment>
<comment type="function">
    <text evidence="1">The secreted form acts as an enterotoxin that causes phospholipase C-dependent elevation of the intracellular calcium concentration in host intestinal mucosa cells. Increased concentration of intracellular calcium disrupts the cytoskeleton and the tight junctions, raising the paracellular permeability. Potentiates chloride ion secretion through a calcium ion-dependent signaling pathway, inducing age-dependent diarrhea. To perform this enterotoxigenic role in vivo, NSP4 is released from infected enterocytes in a soluble form capable of diffusing within the intestinal lumen and interacting with host plasma membrane receptors on neighboring epithelial cells such as integrins ITGA1/ITGB1 and ITGA2/ITGB1.</text>
</comment>
<comment type="subunit">
    <text evidence="1">Homotetramer. Interacts with the immature particle in the viroplasm. Interacts with host CAV1, early and late in infection. Interacts with host integrin ITGA1/ITGB1 heterodimer. Interacts with host integrin ITGA2/ITGB1 heterodimer. Interaction with microtubules blocks trafficking to the Golgi apparatus.</text>
</comment>
<comment type="subcellular location">
    <subcellularLocation>
        <location evidence="1">Host rough endoplasmic reticulum membrane</location>
        <topology evidence="1">Single-pass type III membrane protein</topology>
    </subcellularLocation>
    <subcellularLocation>
        <location evidence="1">Host membrane</location>
        <location evidence="1">Host caveola</location>
        <topology evidence="1">Single-pass type III membrane protein</topology>
    </subcellularLocation>
    <subcellularLocation>
        <location evidence="1">Secreted</location>
    </subcellularLocation>
    <text evidence="1">NSP4 also localizes in vesicular structures which contain autophagosomal markers and associate with viroplasms in virus-infected cells. Additionally, a soluble form of glycosylated NSP4 is secreted despite retention of its transmembrane domain.</text>
</comment>
<comment type="domain">
    <text evidence="1">Binds 1 calcium ion per tetramer.</text>
</comment>
<comment type="PTM">
    <text evidence="1">The N-glycosyl content is primarily Man(9)GlcNAc, with a small amount of Man(8)GlcNAc.</text>
</comment>
<comment type="similarity">
    <text evidence="1">Belongs to the rotavirus NSP4 family.</text>
</comment>
<name>NSP4_ROTH4</name>
<accession>Q82033</accession>
<evidence type="ECO:0000255" key="1">
    <source>
        <dbReference type="HAMAP-Rule" id="MF_04091"/>
    </source>
</evidence>
<sequence>MDKLADLNYTLSVITLMNDTLHSIIEDPGMAYFPYIASVLTVLFALHIASIPTMKIALKASKCSYKVIKYCIVTIINTLLKLAGYKEQVTTKDEIEQQMDRIVKEMRRQLEMIDKLTTREIEQVELLKRIHDNLITRPVDVIDMSKEFNQKNIKTLDEWESGKNPYEPSEVTASM</sequence>
<reference key="1">
    <citation type="journal article" date="1997" name="Virology">
        <title>Genetic characterization of the rotavirus nonstructural protein, NSP4.</title>
        <authorList>
            <person name="Kirkwood C.D."/>
            <person name="Palombo E.A."/>
        </authorList>
    </citation>
    <scope>NUCLEOTIDE SEQUENCE [MRNA]</scope>
</reference>